<proteinExistence type="inferred from homology"/>
<dbReference type="EC" id="2.1.1.74" evidence="1"/>
<dbReference type="EMBL" id="CP000133">
    <property type="protein sequence ID" value="ABC90629.1"/>
    <property type="molecule type" value="Genomic_DNA"/>
</dbReference>
<dbReference type="RefSeq" id="WP_011425126.1">
    <property type="nucleotide sequence ID" value="NC_007761.1"/>
</dbReference>
<dbReference type="SMR" id="Q2K957"/>
<dbReference type="KEGG" id="ret:RHE_CH01836"/>
<dbReference type="eggNOG" id="COG1206">
    <property type="taxonomic scope" value="Bacteria"/>
</dbReference>
<dbReference type="HOGENOM" id="CLU_033057_1_0_5"/>
<dbReference type="OrthoDB" id="9803114at2"/>
<dbReference type="Proteomes" id="UP000001936">
    <property type="component" value="Chromosome"/>
</dbReference>
<dbReference type="GO" id="GO:0005829">
    <property type="term" value="C:cytosol"/>
    <property type="evidence" value="ECO:0007669"/>
    <property type="project" value="TreeGrafter"/>
</dbReference>
<dbReference type="GO" id="GO:0050660">
    <property type="term" value="F:flavin adenine dinucleotide binding"/>
    <property type="evidence" value="ECO:0007669"/>
    <property type="project" value="UniProtKB-UniRule"/>
</dbReference>
<dbReference type="GO" id="GO:0047151">
    <property type="term" value="F:tRNA (uracil(54)-C5)-methyltransferase activity, 5,10-methylenetetrahydrofolate-dependent"/>
    <property type="evidence" value="ECO:0007669"/>
    <property type="project" value="UniProtKB-UniRule"/>
</dbReference>
<dbReference type="GO" id="GO:0030488">
    <property type="term" value="P:tRNA methylation"/>
    <property type="evidence" value="ECO:0007669"/>
    <property type="project" value="TreeGrafter"/>
</dbReference>
<dbReference type="GO" id="GO:0002098">
    <property type="term" value="P:tRNA wobble uridine modification"/>
    <property type="evidence" value="ECO:0007669"/>
    <property type="project" value="TreeGrafter"/>
</dbReference>
<dbReference type="Gene3D" id="3.50.50.60">
    <property type="entry name" value="FAD/NAD(P)-binding domain"/>
    <property type="match status" value="2"/>
</dbReference>
<dbReference type="HAMAP" id="MF_01037">
    <property type="entry name" value="TrmFO"/>
    <property type="match status" value="1"/>
</dbReference>
<dbReference type="InterPro" id="IPR036188">
    <property type="entry name" value="FAD/NAD-bd_sf"/>
</dbReference>
<dbReference type="InterPro" id="IPR002218">
    <property type="entry name" value="MnmG-rel"/>
</dbReference>
<dbReference type="InterPro" id="IPR020595">
    <property type="entry name" value="MnmG-rel_CS"/>
</dbReference>
<dbReference type="InterPro" id="IPR040131">
    <property type="entry name" value="MnmG_N"/>
</dbReference>
<dbReference type="InterPro" id="IPR004417">
    <property type="entry name" value="TrmFO"/>
</dbReference>
<dbReference type="NCBIfam" id="TIGR00137">
    <property type="entry name" value="gid_trmFO"/>
    <property type="match status" value="1"/>
</dbReference>
<dbReference type="NCBIfam" id="NF003739">
    <property type="entry name" value="PRK05335.1"/>
    <property type="match status" value="1"/>
</dbReference>
<dbReference type="PANTHER" id="PTHR11806">
    <property type="entry name" value="GLUCOSE INHIBITED DIVISION PROTEIN A"/>
    <property type="match status" value="1"/>
</dbReference>
<dbReference type="PANTHER" id="PTHR11806:SF2">
    <property type="entry name" value="METHYLENETETRAHYDROFOLATE--TRNA-(URACIL-5-)-METHYLTRANSFERASE TRMFO"/>
    <property type="match status" value="1"/>
</dbReference>
<dbReference type="Pfam" id="PF01134">
    <property type="entry name" value="GIDA"/>
    <property type="match status" value="1"/>
</dbReference>
<dbReference type="SUPFAM" id="SSF51905">
    <property type="entry name" value="FAD/NAD(P)-binding domain"/>
    <property type="match status" value="1"/>
</dbReference>
<dbReference type="PROSITE" id="PS01281">
    <property type="entry name" value="GIDA_2"/>
    <property type="match status" value="1"/>
</dbReference>
<sequence>MDIISSYSPIHVVGGGLAGSEAAWQIASAGVPVILHEMRGVRGTDAHKTDGLAELVCSNSFRSDDATSNAVGVIHAEMRMAGSLIMAAADRHQVPAGGALAVDRDGFSDAVTRAIHDHPLITVMREEITGLPPSDWDLAIVATGPLTAPSLAAAIQAETGEDSLAFFDAIAPIVYRESIDMDICWYQSRYDKVGPGGTGKDYINCPMDEAQYNAFVNALIAGDTVGFKEWEGTPYFDGCLPIEVMAERGRETLRHGPMKPMGLTNAHNPTVKAYAVVQLRQDNALGTLYNMVGFQTKLKYGAQAEIFRMIPGLENAEFARLGGLHRNTYINSPTLLDPSLTLKSRPGLRFAGQITGCEGYVESASVGLMAGRFAAAERKGEAISLPPATTALGSLLGHITGGHIVTDEEPGKRSFQPMNINFGLFPELEPGSIVKPEGVKRFRGKDKTIMKRQLIARRALADCAAWLGQTRTLAERA</sequence>
<comment type="function">
    <text evidence="1">Catalyzes the folate-dependent formation of 5-methyl-uridine at position 54 (M-5-U54) in all tRNAs.</text>
</comment>
<comment type="catalytic activity">
    <reaction evidence="1">
        <text>uridine(54) in tRNA + (6R)-5,10-methylene-5,6,7,8-tetrahydrofolate + NADH + H(+) = 5-methyluridine(54) in tRNA + (6S)-5,6,7,8-tetrahydrofolate + NAD(+)</text>
        <dbReference type="Rhea" id="RHEA:16873"/>
        <dbReference type="Rhea" id="RHEA-COMP:10167"/>
        <dbReference type="Rhea" id="RHEA-COMP:10193"/>
        <dbReference type="ChEBI" id="CHEBI:15378"/>
        <dbReference type="ChEBI" id="CHEBI:15636"/>
        <dbReference type="ChEBI" id="CHEBI:57453"/>
        <dbReference type="ChEBI" id="CHEBI:57540"/>
        <dbReference type="ChEBI" id="CHEBI:57945"/>
        <dbReference type="ChEBI" id="CHEBI:65315"/>
        <dbReference type="ChEBI" id="CHEBI:74447"/>
        <dbReference type="EC" id="2.1.1.74"/>
    </reaction>
</comment>
<comment type="catalytic activity">
    <reaction evidence="1">
        <text>uridine(54) in tRNA + (6R)-5,10-methylene-5,6,7,8-tetrahydrofolate + NADPH + H(+) = 5-methyluridine(54) in tRNA + (6S)-5,6,7,8-tetrahydrofolate + NADP(+)</text>
        <dbReference type="Rhea" id="RHEA:62372"/>
        <dbReference type="Rhea" id="RHEA-COMP:10167"/>
        <dbReference type="Rhea" id="RHEA-COMP:10193"/>
        <dbReference type="ChEBI" id="CHEBI:15378"/>
        <dbReference type="ChEBI" id="CHEBI:15636"/>
        <dbReference type="ChEBI" id="CHEBI:57453"/>
        <dbReference type="ChEBI" id="CHEBI:57783"/>
        <dbReference type="ChEBI" id="CHEBI:58349"/>
        <dbReference type="ChEBI" id="CHEBI:65315"/>
        <dbReference type="ChEBI" id="CHEBI:74447"/>
        <dbReference type="EC" id="2.1.1.74"/>
    </reaction>
</comment>
<comment type="cofactor">
    <cofactor evidence="1">
        <name>FAD</name>
        <dbReference type="ChEBI" id="CHEBI:57692"/>
    </cofactor>
</comment>
<comment type="subcellular location">
    <subcellularLocation>
        <location evidence="1">Cytoplasm</location>
    </subcellularLocation>
</comment>
<comment type="similarity">
    <text evidence="1">Belongs to the MnmG family. TrmFO subfamily.</text>
</comment>
<keyword id="KW-0963">Cytoplasm</keyword>
<keyword id="KW-0274">FAD</keyword>
<keyword id="KW-0285">Flavoprotein</keyword>
<keyword id="KW-0489">Methyltransferase</keyword>
<keyword id="KW-0520">NAD</keyword>
<keyword id="KW-0521">NADP</keyword>
<keyword id="KW-1185">Reference proteome</keyword>
<keyword id="KW-0808">Transferase</keyword>
<keyword id="KW-0819">tRNA processing</keyword>
<gene>
    <name evidence="1" type="primary">trmFO</name>
    <name type="ordered locus">RHE_CH01836</name>
</gene>
<reference key="1">
    <citation type="journal article" date="2006" name="Proc. Natl. Acad. Sci. U.S.A.">
        <title>The partitioned Rhizobium etli genome: genetic and metabolic redundancy in seven interacting replicons.</title>
        <authorList>
            <person name="Gonzalez V."/>
            <person name="Santamaria R.I."/>
            <person name="Bustos P."/>
            <person name="Hernandez-Gonzalez I."/>
            <person name="Medrano-Soto A."/>
            <person name="Moreno-Hagelsieb G."/>
            <person name="Janga S.C."/>
            <person name="Ramirez M.A."/>
            <person name="Jimenez-Jacinto V."/>
            <person name="Collado-Vides J."/>
            <person name="Davila G."/>
        </authorList>
    </citation>
    <scope>NUCLEOTIDE SEQUENCE [LARGE SCALE GENOMIC DNA]</scope>
    <source>
        <strain>ATCC 51251 / DSM 11541 / JCM 21823 / NBRC 15573 / CFN 42</strain>
    </source>
</reference>
<organism>
    <name type="scientific">Rhizobium etli (strain ATCC 51251 / DSM 11541 / JCM 21823 / NBRC 15573 / CFN 42)</name>
    <dbReference type="NCBI Taxonomy" id="347834"/>
    <lineage>
        <taxon>Bacteria</taxon>
        <taxon>Pseudomonadati</taxon>
        <taxon>Pseudomonadota</taxon>
        <taxon>Alphaproteobacteria</taxon>
        <taxon>Hyphomicrobiales</taxon>
        <taxon>Rhizobiaceae</taxon>
        <taxon>Rhizobium/Agrobacterium group</taxon>
        <taxon>Rhizobium</taxon>
    </lineage>
</organism>
<accession>Q2K957</accession>
<evidence type="ECO:0000255" key="1">
    <source>
        <dbReference type="HAMAP-Rule" id="MF_01037"/>
    </source>
</evidence>
<feature type="chain" id="PRO_0000346385" description="Methylenetetrahydrofolate--tRNA-(uracil-5-)-methyltransferase TrmFO">
    <location>
        <begin position="1"/>
        <end position="477"/>
    </location>
</feature>
<feature type="binding site" evidence="1">
    <location>
        <begin position="14"/>
        <end position="19"/>
    </location>
    <ligand>
        <name>FAD</name>
        <dbReference type="ChEBI" id="CHEBI:57692"/>
    </ligand>
</feature>
<protein>
    <recommendedName>
        <fullName evidence="1">Methylenetetrahydrofolate--tRNA-(uracil-5-)-methyltransferase TrmFO</fullName>
        <ecNumber evidence="1">2.1.1.74</ecNumber>
    </recommendedName>
    <alternativeName>
        <fullName evidence="1">Folate-dependent tRNA (uracil-5-)-methyltransferase</fullName>
    </alternativeName>
    <alternativeName>
        <fullName evidence="1">Folate-dependent tRNA(M-5-U54)-methyltransferase</fullName>
    </alternativeName>
</protein>
<name>TRMFO_RHIEC</name>